<proteinExistence type="inferred from homology"/>
<keyword id="KW-0131">Cell cycle</keyword>
<keyword id="KW-0132">Cell division</keyword>
<keyword id="KW-0963">Cytoplasm</keyword>
<keyword id="KW-0238">DNA-binding</keyword>
<keyword id="KW-0717">Septation</keyword>
<protein>
    <recommendedName>
        <fullName evidence="1">Nucleoid occlusion protein</fullName>
        <shortName evidence="1">Noc</shortName>
    </recommendedName>
</protein>
<gene>
    <name evidence="1" type="primary">noc</name>
    <name type="ordered locus">BCG9842_B5327</name>
</gene>
<dbReference type="EMBL" id="CP001186">
    <property type="protein sequence ID" value="ACK93766.1"/>
    <property type="molecule type" value="Genomic_DNA"/>
</dbReference>
<dbReference type="RefSeq" id="WP_000799016.1">
    <property type="nucleotide sequence ID" value="NC_011772.1"/>
</dbReference>
<dbReference type="SMR" id="B7IST1"/>
<dbReference type="GeneID" id="72452131"/>
<dbReference type="KEGG" id="bcg:BCG9842_B5327"/>
<dbReference type="HOGENOM" id="CLU_023853_0_1_9"/>
<dbReference type="Proteomes" id="UP000006744">
    <property type="component" value="Chromosome"/>
</dbReference>
<dbReference type="GO" id="GO:0005694">
    <property type="term" value="C:chromosome"/>
    <property type="evidence" value="ECO:0007669"/>
    <property type="project" value="TreeGrafter"/>
</dbReference>
<dbReference type="GO" id="GO:0005737">
    <property type="term" value="C:cytoplasm"/>
    <property type="evidence" value="ECO:0007669"/>
    <property type="project" value="UniProtKB-UniRule"/>
</dbReference>
<dbReference type="GO" id="GO:0009295">
    <property type="term" value="C:nucleoid"/>
    <property type="evidence" value="ECO:0007669"/>
    <property type="project" value="UniProtKB-SubCell"/>
</dbReference>
<dbReference type="GO" id="GO:0003677">
    <property type="term" value="F:DNA binding"/>
    <property type="evidence" value="ECO:0007669"/>
    <property type="project" value="UniProtKB-UniRule"/>
</dbReference>
<dbReference type="GO" id="GO:0007059">
    <property type="term" value="P:chromosome segregation"/>
    <property type="evidence" value="ECO:0007669"/>
    <property type="project" value="TreeGrafter"/>
</dbReference>
<dbReference type="GO" id="GO:0000917">
    <property type="term" value="P:division septum assembly"/>
    <property type="evidence" value="ECO:0007669"/>
    <property type="project" value="UniProtKB-KW"/>
</dbReference>
<dbReference type="GO" id="GO:0045881">
    <property type="term" value="P:positive regulation of sporulation resulting in formation of a cellular spore"/>
    <property type="evidence" value="ECO:0007669"/>
    <property type="project" value="TreeGrafter"/>
</dbReference>
<dbReference type="CDD" id="cd16393">
    <property type="entry name" value="SPO0J_N"/>
    <property type="match status" value="1"/>
</dbReference>
<dbReference type="FunFam" id="1.10.10.2830:FF:000001">
    <property type="entry name" value="Chromosome partitioning protein ParB"/>
    <property type="match status" value="1"/>
</dbReference>
<dbReference type="FunFam" id="3.90.1530.30:FF:000001">
    <property type="entry name" value="Chromosome partitioning protein ParB"/>
    <property type="match status" value="1"/>
</dbReference>
<dbReference type="Gene3D" id="1.10.10.2830">
    <property type="match status" value="1"/>
</dbReference>
<dbReference type="Gene3D" id="3.90.1530.30">
    <property type="match status" value="1"/>
</dbReference>
<dbReference type="HAMAP" id="MF_02015">
    <property type="entry name" value="ParB_Noc"/>
    <property type="match status" value="1"/>
</dbReference>
<dbReference type="InterPro" id="IPR050336">
    <property type="entry name" value="Chromosome_partition/occlusion"/>
</dbReference>
<dbReference type="InterPro" id="IPR041468">
    <property type="entry name" value="HTH_ParB/Spo0J"/>
</dbReference>
<dbReference type="InterPro" id="IPR023705">
    <property type="entry name" value="Nucleoid_occlusion_protein"/>
</dbReference>
<dbReference type="InterPro" id="IPR004437">
    <property type="entry name" value="ParB/RepB/Spo0J"/>
</dbReference>
<dbReference type="InterPro" id="IPR003115">
    <property type="entry name" value="ParB/Sulfiredoxin_dom"/>
</dbReference>
<dbReference type="InterPro" id="IPR036086">
    <property type="entry name" value="ParB/Sulfiredoxin_sf"/>
</dbReference>
<dbReference type="NCBIfam" id="TIGR04285">
    <property type="entry name" value="nucleoid_noc"/>
    <property type="match status" value="1"/>
</dbReference>
<dbReference type="NCBIfam" id="TIGR00180">
    <property type="entry name" value="parB_part"/>
    <property type="match status" value="1"/>
</dbReference>
<dbReference type="PANTHER" id="PTHR33375">
    <property type="entry name" value="CHROMOSOME-PARTITIONING PROTEIN PARB-RELATED"/>
    <property type="match status" value="1"/>
</dbReference>
<dbReference type="PANTHER" id="PTHR33375:SF8">
    <property type="entry name" value="NUCLEOID OCCLUSION PROTEIN"/>
    <property type="match status" value="1"/>
</dbReference>
<dbReference type="Pfam" id="PF17762">
    <property type="entry name" value="HTH_ParB"/>
    <property type="match status" value="1"/>
</dbReference>
<dbReference type="Pfam" id="PF02195">
    <property type="entry name" value="ParBc"/>
    <property type="match status" value="1"/>
</dbReference>
<dbReference type="SMART" id="SM00470">
    <property type="entry name" value="ParB"/>
    <property type="match status" value="1"/>
</dbReference>
<dbReference type="SUPFAM" id="SSF110849">
    <property type="entry name" value="ParB/Sulfiredoxin"/>
    <property type="match status" value="1"/>
</dbReference>
<reference key="1">
    <citation type="submission" date="2008-10" db="EMBL/GenBank/DDBJ databases">
        <title>Genome sequence of Bacillus cereus G9842.</title>
        <authorList>
            <person name="Dodson R.J."/>
            <person name="Durkin A.S."/>
            <person name="Rosovitz M.J."/>
            <person name="Rasko D.A."/>
            <person name="Hoffmaster A."/>
            <person name="Ravel J."/>
            <person name="Sutton G."/>
        </authorList>
    </citation>
    <scope>NUCLEOTIDE SEQUENCE [LARGE SCALE GENOMIC DNA]</scope>
    <source>
        <strain>G9842</strain>
    </source>
</reference>
<feature type="chain" id="PRO_1000189530" description="Nucleoid occlusion protein">
    <location>
        <begin position="1"/>
        <end position="290"/>
    </location>
</feature>
<feature type="DNA-binding region" description="H-T-H motif" evidence="1">
    <location>
        <begin position="153"/>
        <end position="172"/>
    </location>
</feature>
<comment type="function">
    <text evidence="1">Effects nucleoid occlusion by binding relatively nonspecifically to DNA and preventing the assembly of the division machinery in the vicinity of the nucleoid, especially under conditions that disturb the cell cycle. It helps to coordinate cell division and chromosome segregation by preventing the formation of the Z ring through the nucleoid, which would cause chromosome breakage.</text>
</comment>
<comment type="subcellular location">
    <subcellularLocation>
        <location evidence="1">Cytoplasm</location>
        <location evidence="1">Nucleoid</location>
    </subcellularLocation>
</comment>
<comment type="similarity">
    <text evidence="1">Belongs to the ParB family.</text>
</comment>
<sequence>MKNTFSRLFGFGDKESEFELQDESHEEIDKKVYEEIQEIPIVNITPNRYQPRTVFDDARIDELALTIRTHGLIQPIVVRQYEDDKYEIIAGERRFRAATKLGWEKVPAIIKNLNDTETASVALIENLQREELTAIEEAVAYQKLIELHNLTQEALAQRLGKGQSTIANKLRLLKLPEEIKSALLEKSITERHARALIPLKNEELQLKVLQEIVEKQLNVKQTEERIAKLLEEAKPKRKAKQKAVSRDTRIAMNTIRQSLQMVTESGLNVNSEEEEFDEYYQITIKIPKKK</sequence>
<evidence type="ECO:0000255" key="1">
    <source>
        <dbReference type="HAMAP-Rule" id="MF_02015"/>
    </source>
</evidence>
<accession>B7IST1</accession>
<name>NOC_BACC2</name>
<organism>
    <name type="scientific">Bacillus cereus (strain G9842)</name>
    <dbReference type="NCBI Taxonomy" id="405531"/>
    <lineage>
        <taxon>Bacteria</taxon>
        <taxon>Bacillati</taxon>
        <taxon>Bacillota</taxon>
        <taxon>Bacilli</taxon>
        <taxon>Bacillales</taxon>
        <taxon>Bacillaceae</taxon>
        <taxon>Bacillus</taxon>
        <taxon>Bacillus cereus group</taxon>
    </lineage>
</organism>